<accession>Q89A51</accession>
<feature type="chain" id="PRO_0000214312" description="UPF0301 protein bbp_491">
    <location>
        <begin position="1"/>
        <end position="189"/>
    </location>
</feature>
<comment type="similarity">
    <text evidence="1">Belongs to the UPF0301 (AlgH) family.</text>
</comment>
<name>Y491_BUCBP</name>
<protein>
    <recommendedName>
        <fullName>UPF0301 protein bbp_491</fullName>
    </recommendedName>
</protein>
<sequence length="189" mass="21577">MIINFKNHFLIAMPGLKDPLFKNSVIYMCKHDNNGAMGIIINKKIKNLTIQKILHQLKINIKSSNTLDFKNPVIIGGPILEDRGFILHTFKKKFTTSTHISNDLSITTSRDILEYIANLNNPKNILMALGHCIWKQHQLEQEIAKNIWLTTPADIDIIFNTPISEKWKKSMYSIGIMNILQLTSEIGHA</sequence>
<gene>
    <name type="ordered locus">bbp_491</name>
</gene>
<evidence type="ECO:0000305" key="1"/>
<dbReference type="EMBL" id="AE016826">
    <property type="protein sequence ID" value="AAO27196.1"/>
    <property type="molecule type" value="Genomic_DNA"/>
</dbReference>
<dbReference type="SMR" id="Q89A51"/>
<dbReference type="STRING" id="224915.bbp_491"/>
<dbReference type="KEGG" id="bab:bbp_491"/>
<dbReference type="eggNOG" id="COG1678">
    <property type="taxonomic scope" value="Bacteria"/>
</dbReference>
<dbReference type="HOGENOM" id="CLU_057596_1_0_6"/>
<dbReference type="OrthoDB" id="9807486at2"/>
<dbReference type="Proteomes" id="UP000000601">
    <property type="component" value="Chromosome"/>
</dbReference>
<dbReference type="GO" id="GO:0005829">
    <property type="term" value="C:cytosol"/>
    <property type="evidence" value="ECO:0007669"/>
    <property type="project" value="TreeGrafter"/>
</dbReference>
<dbReference type="Gene3D" id="3.40.1740.10">
    <property type="entry name" value="VC0467-like"/>
    <property type="match status" value="1"/>
</dbReference>
<dbReference type="Gene3D" id="3.30.70.1300">
    <property type="entry name" value="VC0467-like domains"/>
    <property type="match status" value="1"/>
</dbReference>
<dbReference type="HAMAP" id="MF_00758">
    <property type="entry name" value="UPF0301"/>
    <property type="match status" value="1"/>
</dbReference>
<dbReference type="InterPro" id="IPR003774">
    <property type="entry name" value="AlgH-like"/>
</dbReference>
<dbReference type="NCBIfam" id="NF001266">
    <property type="entry name" value="PRK00228.1-1"/>
    <property type="match status" value="1"/>
</dbReference>
<dbReference type="PANTHER" id="PTHR30327">
    <property type="entry name" value="UNCHARACTERIZED PROTEIN YQGE"/>
    <property type="match status" value="1"/>
</dbReference>
<dbReference type="PANTHER" id="PTHR30327:SF1">
    <property type="entry name" value="UPF0301 PROTEIN YQGE"/>
    <property type="match status" value="1"/>
</dbReference>
<dbReference type="Pfam" id="PF02622">
    <property type="entry name" value="DUF179"/>
    <property type="match status" value="1"/>
</dbReference>
<dbReference type="SUPFAM" id="SSF143456">
    <property type="entry name" value="VC0467-like"/>
    <property type="match status" value="1"/>
</dbReference>
<reference key="1">
    <citation type="journal article" date="2003" name="Proc. Natl. Acad. Sci. U.S.A.">
        <title>Reductive genome evolution in Buchnera aphidicola.</title>
        <authorList>
            <person name="van Ham R.C.H.J."/>
            <person name="Kamerbeek J."/>
            <person name="Palacios C."/>
            <person name="Rausell C."/>
            <person name="Abascal F."/>
            <person name="Bastolla U."/>
            <person name="Fernandez J.M."/>
            <person name="Jimenez L."/>
            <person name="Postigo M."/>
            <person name="Silva F.J."/>
            <person name="Tamames J."/>
            <person name="Viguera E."/>
            <person name="Latorre A."/>
            <person name="Valencia A."/>
            <person name="Moran F."/>
            <person name="Moya A."/>
        </authorList>
    </citation>
    <scope>NUCLEOTIDE SEQUENCE [LARGE SCALE GENOMIC DNA]</scope>
    <source>
        <strain>Bp</strain>
    </source>
</reference>
<keyword id="KW-1185">Reference proteome</keyword>
<proteinExistence type="inferred from homology"/>
<organism>
    <name type="scientific">Buchnera aphidicola subsp. Baizongia pistaciae (strain Bp)</name>
    <dbReference type="NCBI Taxonomy" id="224915"/>
    <lineage>
        <taxon>Bacteria</taxon>
        <taxon>Pseudomonadati</taxon>
        <taxon>Pseudomonadota</taxon>
        <taxon>Gammaproteobacteria</taxon>
        <taxon>Enterobacterales</taxon>
        <taxon>Erwiniaceae</taxon>
        <taxon>Buchnera</taxon>
    </lineage>
</organism>